<organism>
    <name type="scientific">Schizosaccharomyces pombe (strain 972 / ATCC 24843)</name>
    <name type="common">Fission yeast</name>
    <dbReference type="NCBI Taxonomy" id="284812"/>
    <lineage>
        <taxon>Eukaryota</taxon>
        <taxon>Fungi</taxon>
        <taxon>Dikarya</taxon>
        <taxon>Ascomycota</taxon>
        <taxon>Taphrinomycotina</taxon>
        <taxon>Schizosaccharomycetes</taxon>
        <taxon>Schizosaccharomycetales</taxon>
        <taxon>Schizosaccharomycetaceae</taxon>
        <taxon>Schizosaccharomyces</taxon>
    </lineage>
</organism>
<feature type="chain" id="PRO_0000304095" description="CENP-A recruiting complex protein mis20">
    <location>
        <begin position="1"/>
        <end position="253"/>
    </location>
</feature>
<feature type="region of interest" description="Disordered" evidence="1">
    <location>
        <begin position="113"/>
        <end position="136"/>
    </location>
</feature>
<evidence type="ECO:0000256" key="1">
    <source>
        <dbReference type="SAM" id="MobiDB-lite"/>
    </source>
</evidence>
<evidence type="ECO:0000269" key="2">
    <source>
    </source>
</evidence>
<evidence type="ECO:0000269" key="3">
    <source>
    </source>
</evidence>
<evidence type="ECO:0000269" key="4">
    <source>
    </source>
</evidence>
<evidence type="ECO:0000303" key="5">
    <source>
    </source>
</evidence>
<evidence type="ECO:0000303" key="6">
    <source>
    </source>
</evidence>
<evidence type="ECO:0000305" key="7"/>
<dbReference type="EMBL" id="CU329671">
    <property type="protein sequence ID" value="CAA22889.1"/>
    <property type="molecule type" value="Genomic_DNA"/>
</dbReference>
<dbReference type="PIR" id="T40687">
    <property type="entry name" value="T40687"/>
</dbReference>
<dbReference type="RefSeq" id="NP_596332.1">
    <property type="nucleotide sequence ID" value="NM_001022253.2"/>
</dbReference>
<dbReference type="SMR" id="O94682"/>
<dbReference type="BioGRID" id="277649">
    <property type="interactions" value="9"/>
</dbReference>
<dbReference type="STRING" id="284812.O94682"/>
<dbReference type="iPTMnet" id="O94682"/>
<dbReference type="PaxDb" id="4896-SPBC776.16.1"/>
<dbReference type="EnsemblFungi" id="SPBC776.16.1">
    <property type="protein sequence ID" value="SPBC776.16.1:pep"/>
    <property type="gene ID" value="SPBC776.16"/>
</dbReference>
<dbReference type="PomBase" id="SPBC776.16">
    <property type="gene designation" value="mis20"/>
</dbReference>
<dbReference type="VEuPathDB" id="FungiDB:SPBC776.16"/>
<dbReference type="HOGENOM" id="CLU_1099038_0_0_1"/>
<dbReference type="InParanoid" id="O94682"/>
<dbReference type="PRO" id="PR:O94682"/>
<dbReference type="Proteomes" id="UP000002485">
    <property type="component" value="Chromosome II"/>
</dbReference>
<dbReference type="GO" id="GO:0098654">
    <property type="term" value="C:CENP-A recruiting complex"/>
    <property type="evidence" value="ECO:0000314"/>
    <property type="project" value="PomBase"/>
</dbReference>
<dbReference type="GO" id="GO:0034506">
    <property type="term" value="C:chromosome, centromeric core domain"/>
    <property type="evidence" value="ECO:0000269"/>
    <property type="project" value="PomBase"/>
</dbReference>
<dbReference type="GO" id="GO:0005829">
    <property type="term" value="C:cytosol"/>
    <property type="evidence" value="ECO:0007005"/>
    <property type="project" value="PomBase"/>
</dbReference>
<dbReference type="GO" id="GO:0005654">
    <property type="term" value="C:nucleoplasm"/>
    <property type="evidence" value="ECO:0000314"/>
    <property type="project" value="PomBase"/>
</dbReference>
<dbReference type="GO" id="GO:0005816">
    <property type="term" value="C:spindle pole body"/>
    <property type="evidence" value="ECO:0007669"/>
    <property type="project" value="UniProtKB-SubCell"/>
</dbReference>
<dbReference type="GO" id="GO:0051301">
    <property type="term" value="P:cell division"/>
    <property type="evidence" value="ECO:0007669"/>
    <property type="project" value="UniProtKB-KW"/>
</dbReference>
<dbReference type="GO" id="GO:0000070">
    <property type="term" value="P:mitotic sister chromatid segregation"/>
    <property type="evidence" value="ECO:0000303"/>
    <property type="project" value="PomBase"/>
</dbReference>
<proteinExistence type="evidence at protein level"/>
<keyword id="KW-0131">Cell cycle</keyword>
<keyword id="KW-0132">Cell division</keyword>
<keyword id="KW-0137">Centromere</keyword>
<keyword id="KW-0158">Chromosome</keyword>
<keyword id="KW-0963">Cytoplasm</keyword>
<keyword id="KW-0206">Cytoskeleton</keyword>
<keyword id="KW-0498">Mitosis</keyword>
<keyword id="KW-1185">Reference proteome</keyword>
<name>MIS20_SCHPO</name>
<comment type="function">
    <text evidence="3 4">Component of the CENP-A recruiting complex that ensures the integrity of mitotic spindles through maintenance of kinetochore factors mis6/CENP-I and cnp1/CENP-A (PubMed:24774534, PubMed:24789708). Seems dispensable for proper chromosome segregation (PubMed:24774534).</text>
</comment>
<comment type="subunit">
    <text evidence="3 4">Component of the CENP-A recruiting complex composed of at least mis16, mis19, mis19 and mis20 (PubMed:24774534, PubMed:24789708).</text>
</comment>
<comment type="subcellular location">
    <subcellularLocation>
        <location evidence="2">Cytoplasm</location>
    </subcellularLocation>
    <subcellularLocation>
        <location evidence="2">Cytoplasm</location>
        <location evidence="2">Cytoskeleton</location>
        <location evidence="2">Microtubule organizing center</location>
        <location evidence="2">Spindle pole body</location>
    </subcellularLocation>
    <subcellularLocation>
        <location evidence="3 4">Chromosome</location>
        <location evidence="3 4">Centromere</location>
    </subcellularLocation>
    <text evidence="3">Localizes at the centromeres during interphase, but not in mitosis (PubMed:24774534).</text>
</comment>
<accession>O94682</accession>
<gene>
    <name evidence="5" type="primary">mis20</name>
    <name evidence="6" type="synonym">eic2</name>
    <name type="ORF">SPBC776.16</name>
</gene>
<reference key="1">
    <citation type="journal article" date="2002" name="Nature">
        <title>The genome sequence of Schizosaccharomyces pombe.</title>
        <authorList>
            <person name="Wood V."/>
            <person name="Gwilliam R."/>
            <person name="Rajandream M.A."/>
            <person name="Lyne M.H."/>
            <person name="Lyne R."/>
            <person name="Stewart A."/>
            <person name="Sgouros J.G."/>
            <person name="Peat N."/>
            <person name="Hayles J."/>
            <person name="Baker S.G."/>
            <person name="Basham D."/>
            <person name="Bowman S."/>
            <person name="Brooks K."/>
            <person name="Brown D."/>
            <person name="Brown S."/>
            <person name="Chillingworth T."/>
            <person name="Churcher C.M."/>
            <person name="Collins M."/>
            <person name="Connor R."/>
            <person name="Cronin A."/>
            <person name="Davis P."/>
            <person name="Feltwell T."/>
            <person name="Fraser A."/>
            <person name="Gentles S."/>
            <person name="Goble A."/>
            <person name="Hamlin N."/>
            <person name="Harris D.E."/>
            <person name="Hidalgo J."/>
            <person name="Hodgson G."/>
            <person name="Holroyd S."/>
            <person name="Hornsby T."/>
            <person name="Howarth S."/>
            <person name="Huckle E.J."/>
            <person name="Hunt S."/>
            <person name="Jagels K."/>
            <person name="James K.D."/>
            <person name="Jones L."/>
            <person name="Jones M."/>
            <person name="Leather S."/>
            <person name="McDonald S."/>
            <person name="McLean J."/>
            <person name="Mooney P."/>
            <person name="Moule S."/>
            <person name="Mungall K.L."/>
            <person name="Murphy L.D."/>
            <person name="Niblett D."/>
            <person name="Odell C."/>
            <person name="Oliver K."/>
            <person name="O'Neil S."/>
            <person name="Pearson D."/>
            <person name="Quail M.A."/>
            <person name="Rabbinowitsch E."/>
            <person name="Rutherford K.M."/>
            <person name="Rutter S."/>
            <person name="Saunders D."/>
            <person name="Seeger K."/>
            <person name="Sharp S."/>
            <person name="Skelton J."/>
            <person name="Simmonds M.N."/>
            <person name="Squares R."/>
            <person name="Squares S."/>
            <person name="Stevens K."/>
            <person name="Taylor K."/>
            <person name="Taylor R.G."/>
            <person name="Tivey A."/>
            <person name="Walsh S.V."/>
            <person name="Warren T."/>
            <person name="Whitehead S."/>
            <person name="Woodward J.R."/>
            <person name="Volckaert G."/>
            <person name="Aert R."/>
            <person name="Robben J."/>
            <person name="Grymonprez B."/>
            <person name="Weltjens I."/>
            <person name="Vanstreels E."/>
            <person name="Rieger M."/>
            <person name="Schaefer M."/>
            <person name="Mueller-Auer S."/>
            <person name="Gabel C."/>
            <person name="Fuchs M."/>
            <person name="Duesterhoeft A."/>
            <person name="Fritzc C."/>
            <person name="Holzer E."/>
            <person name="Moestl D."/>
            <person name="Hilbert H."/>
            <person name="Borzym K."/>
            <person name="Langer I."/>
            <person name="Beck A."/>
            <person name="Lehrach H."/>
            <person name="Reinhardt R."/>
            <person name="Pohl T.M."/>
            <person name="Eger P."/>
            <person name="Zimmermann W."/>
            <person name="Wedler H."/>
            <person name="Wambutt R."/>
            <person name="Purnelle B."/>
            <person name="Goffeau A."/>
            <person name="Cadieu E."/>
            <person name="Dreano S."/>
            <person name="Gloux S."/>
            <person name="Lelaure V."/>
            <person name="Mottier S."/>
            <person name="Galibert F."/>
            <person name="Aves S.J."/>
            <person name="Xiang Z."/>
            <person name="Hunt C."/>
            <person name="Moore K."/>
            <person name="Hurst S.M."/>
            <person name="Lucas M."/>
            <person name="Rochet M."/>
            <person name="Gaillardin C."/>
            <person name="Tallada V.A."/>
            <person name="Garzon A."/>
            <person name="Thode G."/>
            <person name="Daga R.R."/>
            <person name="Cruzado L."/>
            <person name="Jimenez J."/>
            <person name="Sanchez M."/>
            <person name="del Rey F."/>
            <person name="Benito J."/>
            <person name="Dominguez A."/>
            <person name="Revuelta J.L."/>
            <person name="Moreno S."/>
            <person name="Armstrong J."/>
            <person name="Forsburg S.L."/>
            <person name="Cerutti L."/>
            <person name="Lowe T."/>
            <person name="McCombie W.R."/>
            <person name="Paulsen I."/>
            <person name="Potashkin J."/>
            <person name="Shpakovski G.V."/>
            <person name="Ussery D."/>
            <person name="Barrell B.G."/>
            <person name="Nurse P."/>
        </authorList>
    </citation>
    <scope>NUCLEOTIDE SEQUENCE [LARGE SCALE GENOMIC DNA]</scope>
    <source>
        <strain>972 / ATCC 24843</strain>
    </source>
</reference>
<reference key="2">
    <citation type="journal article" date="2006" name="Nat. Biotechnol.">
        <title>ORFeome cloning and global analysis of protein localization in the fission yeast Schizosaccharomyces pombe.</title>
        <authorList>
            <person name="Matsuyama A."/>
            <person name="Arai R."/>
            <person name="Yashiroda Y."/>
            <person name="Shirai A."/>
            <person name="Kamata A."/>
            <person name="Sekido S."/>
            <person name="Kobayashi Y."/>
            <person name="Hashimoto A."/>
            <person name="Hamamoto M."/>
            <person name="Hiraoka Y."/>
            <person name="Horinouchi S."/>
            <person name="Yoshida M."/>
        </authorList>
    </citation>
    <scope>SUBCELLULAR LOCATION [LARGE SCALE ANALYSIS]</scope>
</reference>
<reference key="3">
    <citation type="journal article" date="2014" name="Genes Cells">
        <title>Schizosaccharomyces pombe centromere protein Mis19 links Mis16 and Mis18 to recruit CENP-A through interacting with NMD factors and the SWI/SNF complex.</title>
        <authorList>
            <person name="Hayashi T."/>
            <person name="Ebe M."/>
            <person name="Nagao K."/>
            <person name="Kokubu A."/>
            <person name="Sajiki K."/>
            <person name="Yanagida M."/>
        </authorList>
    </citation>
    <scope>FUNCTION</scope>
    <scope>IDENTIFICATION IN THE CENP-A RECRUITING COMPLEX</scope>
    <scope>SUBCELLULAR LOCATION</scope>
</reference>
<reference key="4">
    <citation type="journal article" date="2014" name="Open Biol.">
        <title>Eic1 links Mis18 with the CCAN/Mis6/Ctf19 complex to promote CENP-A assembly.</title>
        <authorList>
            <person name="Subramanian L."/>
            <person name="Toda N.R."/>
            <person name="Rappsilber J."/>
            <person name="Allshire R.C."/>
        </authorList>
    </citation>
    <scope>FUNCTION</scope>
    <scope>IDENTIFICATION IN THE CENP-A RECRUITING COMPLEX</scope>
    <scope>SUBCELLULAR LOCATION</scope>
</reference>
<sequence>MLEQSESHAFINNAPKEDRIQVKFEQLFESLPLPLRAEEALSKLRHDSARLMILKTSDPTLNMSTYSIEDSPMGFECLKYNLSDNNKLLSQNNYRLPDYLEEDEIVSYTFSKTGPTTSKNKHPSHSNTIRSPPYKVKKESCHTEINNVSNVSTESINVIDASRGYSPYTSVDSLSVSKNRSFISLEESASNQYDAAEAFYFNADSSSPLRKLSPIELPVTPIRRKTPTINPNSELKRLQTFGKLILHKGSRRR</sequence>
<protein>
    <recommendedName>
        <fullName evidence="7">CENP-A recruiting complex protein mis20</fullName>
    </recommendedName>
    <alternativeName>
        <fullName evidence="6">Eighteen-interacting centromere protein 2</fullName>
    </alternativeName>
    <alternativeName>
        <fullName evidence="7">Kinetochore protein mis20</fullName>
    </alternativeName>
</protein>